<accession>Q5PIT7</accession>
<organism>
    <name type="scientific">Salmonella paratyphi A (strain ATCC 9150 / SARB42)</name>
    <dbReference type="NCBI Taxonomy" id="295319"/>
    <lineage>
        <taxon>Bacteria</taxon>
        <taxon>Pseudomonadati</taxon>
        <taxon>Pseudomonadota</taxon>
        <taxon>Gammaproteobacteria</taxon>
        <taxon>Enterobacterales</taxon>
        <taxon>Enterobacteriaceae</taxon>
        <taxon>Salmonella</taxon>
    </lineage>
</organism>
<keyword id="KW-0648">Protein biosynthesis</keyword>
<keyword id="KW-0808">Transferase</keyword>
<comment type="function">
    <text evidence="2">Attaches a formyl group to the free amino group of methionyl-tRNA(fMet). The formyl group appears to play a dual role in the initiator identity of N-formylmethionyl-tRNA by promoting its recognition by IF2 and preventing the misappropriation of this tRNA by the elongation apparatus.</text>
</comment>
<comment type="catalytic activity">
    <reaction evidence="2">
        <text>L-methionyl-tRNA(fMet) + (6R)-10-formyltetrahydrofolate = N-formyl-L-methionyl-tRNA(fMet) + (6S)-5,6,7,8-tetrahydrofolate + H(+)</text>
        <dbReference type="Rhea" id="RHEA:24380"/>
        <dbReference type="Rhea" id="RHEA-COMP:9952"/>
        <dbReference type="Rhea" id="RHEA-COMP:9953"/>
        <dbReference type="ChEBI" id="CHEBI:15378"/>
        <dbReference type="ChEBI" id="CHEBI:57453"/>
        <dbReference type="ChEBI" id="CHEBI:78530"/>
        <dbReference type="ChEBI" id="CHEBI:78844"/>
        <dbReference type="ChEBI" id="CHEBI:195366"/>
        <dbReference type="EC" id="2.1.2.9"/>
    </reaction>
</comment>
<comment type="similarity">
    <text evidence="2 3">Belongs to the Fmt family.</text>
</comment>
<dbReference type="EC" id="2.1.2.9" evidence="2"/>
<dbReference type="EMBL" id="CP000026">
    <property type="protein sequence ID" value="AAV79090.1"/>
    <property type="molecule type" value="Genomic_DNA"/>
</dbReference>
<dbReference type="RefSeq" id="WP_001285165.1">
    <property type="nucleotide sequence ID" value="NC_006511.1"/>
</dbReference>
<dbReference type="SMR" id="Q5PIT7"/>
<dbReference type="KEGG" id="spt:SPA3274"/>
<dbReference type="HOGENOM" id="CLU_033347_1_2_6"/>
<dbReference type="Proteomes" id="UP000008185">
    <property type="component" value="Chromosome"/>
</dbReference>
<dbReference type="GO" id="GO:0005829">
    <property type="term" value="C:cytosol"/>
    <property type="evidence" value="ECO:0007669"/>
    <property type="project" value="TreeGrafter"/>
</dbReference>
<dbReference type="GO" id="GO:0004479">
    <property type="term" value="F:methionyl-tRNA formyltransferase activity"/>
    <property type="evidence" value="ECO:0007669"/>
    <property type="project" value="UniProtKB-UniRule"/>
</dbReference>
<dbReference type="CDD" id="cd08646">
    <property type="entry name" value="FMT_core_Met-tRNA-FMT_N"/>
    <property type="match status" value="1"/>
</dbReference>
<dbReference type="CDD" id="cd08704">
    <property type="entry name" value="Met_tRNA_FMT_C"/>
    <property type="match status" value="1"/>
</dbReference>
<dbReference type="FunFam" id="3.10.25.10:FF:000001">
    <property type="entry name" value="Methionyl-tRNA formyltransferase"/>
    <property type="match status" value="1"/>
</dbReference>
<dbReference type="FunFam" id="3.40.50.170:FF:000003">
    <property type="entry name" value="Methionyl-tRNA formyltransferase"/>
    <property type="match status" value="1"/>
</dbReference>
<dbReference type="Gene3D" id="3.10.25.10">
    <property type="entry name" value="Formyl transferase, C-terminal domain"/>
    <property type="match status" value="1"/>
</dbReference>
<dbReference type="Gene3D" id="3.40.50.170">
    <property type="entry name" value="Formyl transferase, N-terminal domain"/>
    <property type="match status" value="1"/>
</dbReference>
<dbReference type="HAMAP" id="MF_00182">
    <property type="entry name" value="Formyl_trans"/>
    <property type="match status" value="1"/>
</dbReference>
<dbReference type="InterPro" id="IPR005794">
    <property type="entry name" value="Fmt"/>
</dbReference>
<dbReference type="InterPro" id="IPR005793">
    <property type="entry name" value="Formyl_trans_C"/>
</dbReference>
<dbReference type="InterPro" id="IPR037022">
    <property type="entry name" value="Formyl_trans_C_sf"/>
</dbReference>
<dbReference type="InterPro" id="IPR002376">
    <property type="entry name" value="Formyl_transf_N"/>
</dbReference>
<dbReference type="InterPro" id="IPR036477">
    <property type="entry name" value="Formyl_transf_N_sf"/>
</dbReference>
<dbReference type="InterPro" id="IPR011034">
    <property type="entry name" value="Formyl_transferase-like_C_sf"/>
</dbReference>
<dbReference type="InterPro" id="IPR001555">
    <property type="entry name" value="GART_AS"/>
</dbReference>
<dbReference type="InterPro" id="IPR044135">
    <property type="entry name" value="Met-tRNA-FMT_C"/>
</dbReference>
<dbReference type="InterPro" id="IPR041711">
    <property type="entry name" value="Met-tRNA-FMT_N"/>
</dbReference>
<dbReference type="NCBIfam" id="TIGR00460">
    <property type="entry name" value="fmt"/>
    <property type="match status" value="1"/>
</dbReference>
<dbReference type="PANTHER" id="PTHR11138">
    <property type="entry name" value="METHIONYL-TRNA FORMYLTRANSFERASE"/>
    <property type="match status" value="1"/>
</dbReference>
<dbReference type="PANTHER" id="PTHR11138:SF5">
    <property type="entry name" value="METHIONYL-TRNA FORMYLTRANSFERASE, MITOCHONDRIAL"/>
    <property type="match status" value="1"/>
</dbReference>
<dbReference type="Pfam" id="PF02911">
    <property type="entry name" value="Formyl_trans_C"/>
    <property type="match status" value="1"/>
</dbReference>
<dbReference type="Pfam" id="PF00551">
    <property type="entry name" value="Formyl_trans_N"/>
    <property type="match status" value="1"/>
</dbReference>
<dbReference type="SUPFAM" id="SSF50486">
    <property type="entry name" value="FMT C-terminal domain-like"/>
    <property type="match status" value="1"/>
</dbReference>
<dbReference type="SUPFAM" id="SSF53328">
    <property type="entry name" value="Formyltransferase"/>
    <property type="match status" value="1"/>
</dbReference>
<dbReference type="PROSITE" id="PS00373">
    <property type="entry name" value="GART"/>
    <property type="match status" value="1"/>
</dbReference>
<protein>
    <recommendedName>
        <fullName evidence="2">Methionyl-tRNA formyltransferase</fullName>
        <ecNumber evidence="2">2.1.2.9</ecNumber>
    </recommendedName>
</protein>
<gene>
    <name evidence="2" type="primary">fmt</name>
    <name type="ordered locus">SPA3274</name>
</gene>
<sequence>MSDSLRIIFAGTPDFAARHLDALLTSGHNVVGVFTQPDRPAGRGKKLMPSPVKVLAEEKGLPVFQPVSLRPQENQHLVADLHADVMVVVAYGLILPKAVLDMPRLGCINVHGSLLPRWRGAAPIQRSLWAGDAETGVTIMQMDVGLDTGDMLYKLACPITAEDTSGSLYNKLAELGPQGLITTLKQLADGTATPEAQNEALVTHAEKLSKEEARIDWSLSAAQLERCIRAFNPWPMSWLEIDGQPVKVWQASVIEDATQSLPGTILAATKQGIQVATGKGILNLLSLQPAGKKAMSAQDLLNSRREWFIPGNRLA</sequence>
<reference key="1">
    <citation type="journal article" date="2004" name="Nat. Genet.">
        <title>Comparison of genome degradation in Paratyphi A and Typhi, human-restricted serovars of Salmonella enterica that cause typhoid.</title>
        <authorList>
            <person name="McClelland M."/>
            <person name="Sanderson K.E."/>
            <person name="Clifton S.W."/>
            <person name="Latreille P."/>
            <person name="Porwollik S."/>
            <person name="Sabo A."/>
            <person name="Meyer R."/>
            <person name="Bieri T."/>
            <person name="Ozersky P."/>
            <person name="McLellan M."/>
            <person name="Harkins C.R."/>
            <person name="Wang C."/>
            <person name="Nguyen C."/>
            <person name="Berghoff A."/>
            <person name="Elliott G."/>
            <person name="Kohlberg S."/>
            <person name="Strong C."/>
            <person name="Du F."/>
            <person name="Carter J."/>
            <person name="Kremizki C."/>
            <person name="Layman D."/>
            <person name="Leonard S."/>
            <person name="Sun H."/>
            <person name="Fulton L."/>
            <person name="Nash W."/>
            <person name="Miner T."/>
            <person name="Minx P."/>
            <person name="Delehaunty K."/>
            <person name="Fronick C."/>
            <person name="Magrini V."/>
            <person name="Nhan M."/>
            <person name="Warren W."/>
            <person name="Florea L."/>
            <person name="Spieth J."/>
            <person name="Wilson R.K."/>
        </authorList>
    </citation>
    <scope>NUCLEOTIDE SEQUENCE [LARGE SCALE GENOMIC DNA]</scope>
    <source>
        <strain>ATCC 9150 / SARB42</strain>
    </source>
</reference>
<evidence type="ECO:0000250" key="1"/>
<evidence type="ECO:0000255" key="2">
    <source>
        <dbReference type="HAMAP-Rule" id="MF_00182"/>
    </source>
</evidence>
<evidence type="ECO:0000305" key="3"/>
<feature type="initiator methionine" description="Removed" evidence="1">
    <location>
        <position position="1"/>
    </location>
</feature>
<feature type="chain" id="PRO_0000083039" description="Methionyl-tRNA formyltransferase">
    <location>
        <begin position="2"/>
        <end position="315"/>
    </location>
</feature>
<feature type="region of interest" description="N-terminal domain">
    <location>
        <begin position="2"/>
        <end position="189"/>
    </location>
</feature>
<feature type="region of interest" description="C-terminal domain">
    <location>
        <begin position="210"/>
        <end position="315"/>
    </location>
</feature>
<feature type="binding site" evidence="2">
    <location>
        <begin position="113"/>
        <end position="116"/>
    </location>
    <ligand>
        <name>(6S)-5,6,7,8-tetrahydrofolate</name>
        <dbReference type="ChEBI" id="CHEBI:57453"/>
    </ligand>
</feature>
<proteinExistence type="inferred from homology"/>
<name>FMT_SALPA</name>